<name>SYP31_ARATH</name>
<comment type="function">
    <text evidence="1">Vesicle trafficking protein that functions in the secretory pathway.</text>
</comment>
<comment type="subunit">
    <text evidence="5">Part of the t-SNARE complex. Interacts with CDC48A, but not with VPS45.</text>
</comment>
<comment type="interaction">
    <interactant intactId="EBI-4434817">
        <id>Q9FFK1</id>
    </interactant>
    <interactant intactId="EBI-4424378">
        <id>Q8VZW1</id>
        <label>NIP1-1</label>
    </interactant>
    <organismsDiffer>false</organismsDiffer>
    <experiments>2</experiments>
</comment>
<comment type="subcellular location">
    <subcellularLocation>
        <location evidence="1">Golgi apparatus</location>
        <location evidence="1">cis-Golgi network membrane</location>
        <topology evidence="1">Single-pass type IV membrane protein</topology>
    </subcellularLocation>
    <subcellularLocation>
        <location evidence="5">Cytoplasm</location>
    </subcellularLocation>
    <subcellularLocation>
        <location evidence="5">Endosome</location>
    </subcellularLocation>
    <text>During cytokinesis, also found in the division plane.</text>
</comment>
<comment type="similarity">
    <text evidence="6">Belongs to the syntaxin family.</text>
</comment>
<organism>
    <name type="scientific">Arabidopsis thaliana</name>
    <name type="common">Mouse-ear cress</name>
    <dbReference type="NCBI Taxonomy" id="3702"/>
    <lineage>
        <taxon>Eukaryota</taxon>
        <taxon>Viridiplantae</taxon>
        <taxon>Streptophyta</taxon>
        <taxon>Embryophyta</taxon>
        <taxon>Tracheophyta</taxon>
        <taxon>Spermatophyta</taxon>
        <taxon>Magnoliopsida</taxon>
        <taxon>eudicotyledons</taxon>
        <taxon>Gunneridae</taxon>
        <taxon>Pentapetalae</taxon>
        <taxon>rosids</taxon>
        <taxon>malvids</taxon>
        <taxon>Brassicales</taxon>
        <taxon>Brassicaceae</taxon>
        <taxon>Camelineae</taxon>
        <taxon>Arabidopsis</taxon>
    </lineage>
</organism>
<evidence type="ECO:0000250" key="1"/>
<evidence type="ECO:0000255" key="2"/>
<evidence type="ECO:0000255" key="3">
    <source>
        <dbReference type="PROSITE-ProRule" id="PRU00202"/>
    </source>
</evidence>
<evidence type="ECO:0000256" key="4">
    <source>
        <dbReference type="SAM" id="MobiDB-lite"/>
    </source>
</evidence>
<evidence type="ECO:0000269" key="5">
    <source>
    </source>
</evidence>
<evidence type="ECO:0000305" key="6"/>
<dbReference type="EMBL" id="AF051853">
    <property type="protein sequence ID" value="AAC06291.1"/>
    <property type="molecule type" value="mRNA"/>
</dbReference>
<dbReference type="EMBL" id="AB005237">
    <property type="protein sequence ID" value="BAB09670.1"/>
    <property type="molecule type" value="Genomic_DNA"/>
</dbReference>
<dbReference type="EMBL" id="CP002688">
    <property type="protein sequence ID" value="AED90921.1"/>
    <property type="molecule type" value="Genomic_DNA"/>
</dbReference>
<dbReference type="EMBL" id="AY054184">
    <property type="protein sequence ID" value="AAL06845.1"/>
    <property type="molecule type" value="mRNA"/>
</dbReference>
<dbReference type="EMBL" id="AY066041">
    <property type="protein sequence ID" value="AAL47408.1"/>
    <property type="molecule type" value="mRNA"/>
</dbReference>
<dbReference type="RefSeq" id="NP_196195.1">
    <property type="nucleotide sequence ID" value="NM_120658.5"/>
</dbReference>
<dbReference type="SMR" id="Q9FFK1"/>
<dbReference type="BioGRID" id="15740">
    <property type="interactions" value="47"/>
</dbReference>
<dbReference type="FunCoup" id="Q9FFK1">
    <property type="interactions" value="4339"/>
</dbReference>
<dbReference type="IntAct" id="Q9FFK1">
    <property type="interactions" value="38"/>
</dbReference>
<dbReference type="STRING" id="3702.Q9FFK1"/>
<dbReference type="PaxDb" id="3702-AT5G05760.1"/>
<dbReference type="ProteomicsDB" id="233056"/>
<dbReference type="EnsemblPlants" id="AT5G05760.1">
    <property type="protein sequence ID" value="AT5G05760.1"/>
    <property type="gene ID" value="AT5G05760"/>
</dbReference>
<dbReference type="GeneID" id="830461"/>
<dbReference type="Gramene" id="AT5G05760.1">
    <property type="protein sequence ID" value="AT5G05760.1"/>
    <property type="gene ID" value="AT5G05760"/>
</dbReference>
<dbReference type="KEGG" id="ath:AT5G05760"/>
<dbReference type="Araport" id="AT5G05760"/>
<dbReference type="TAIR" id="AT5G05760">
    <property type="gene designation" value="SYP31"/>
</dbReference>
<dbReference type="eggNOG" id="KOG0812">
    <property type="taxonomic scope" value="Eukaryota"/>
</dbReference>
<dbReference type="HOGENOM" id="CLU_044998_0_0_1"/>
<dbReference type="InParanoid" id="Q9FFK1"/>
<dbReference type="OMA" id="NTPSQQM"/>
<dbReference type="OrthoDB" id="421009at2759"/>
<dbReference type="PhylomeDB" id="Q9FFK1"/>
<dbReference type="PRO" id="PR:Q9FFK1"/>
<dbReference type="Proteomes" id="UP000006548">
    <property type="component" value="Chromosome 5"/>
</dbReference>
<dbReference type="ExpressionAtlas" id="Q9FFK1">
    <property type="expression patterns" value="baseline and differential"/>
</dbReference>
<dbReference type="GO" id="GO:0009504">
    <property type="term" value="C:cell plate"/>
    <property type="evidence" value="ECO:0000314"/>
    <property type="project" value="TAIR"/>
</dbReference>
<dbReference type="GO" id="GO:0005768">
    <property type="term" value="C:endosome"/>
    <property type="evidence" value="ECO:0007669"/>
    <property type="project" value="UniProtKB-SubCell"/>
</dbReference>
<dbReference type="GO" id="GO:0005794">
    <property type="term" value="C:Golgi apparatus"/>
    <property type="evidence" value="ECO:0007669"/>
    <property type="project" value="UniProtKB-SubCell"/>
</dbReference>
<dbReference type="GO" id="GO:0043231">
    <property type="term" value="C:intracellular membrane-bounded organelle"/>
    <property type="evidence" value="ECO:0000314"/>
    <property type="project" value="TAIR"/>
</dbReference>
<dbReference type="GO" id="GO:0016020">
    <property type="term" value="C:membrane"/>
    <property type="evidence" value="ECO:0007669"/>
    <property type="project" value="UniProtKB-KW"/>
</dbReference>
<dbReference type="GO" id="GO:0005484">
    <property type="term" value="F:SNAP receptor activity"/>
    <property type="evidence" value="ECO:0007669"/>
    <property type="project" value="InterPro"/>
</dbReference>
<dbReference type="GO" id="GO:0006886">
    <property type="term" value="P:intracellular protein transport"/>
    <property type="evidence" value="ECO:0007669"/>
    <property type="project" value="InterPro"/>
</dbReference>
<dbReference type="GO" id="GO:0016192">
    <property type="term" value="P:vesicle-mediated transport"/>
    <property type="evidence" value="ECO:0007669"/>
    <property type="project" value="InterPro"/>
</dbReference>
<dbReference type="CDD" id="cd15844">
    <property type="entry name" value="SNARE_syntaxin5"/>
    <property type="match status" value="1"/>
</dbReference>
<dbReference type="Gene3D" id="1.20.58.70">
    <property type="match status" value="1"/>
</dbReference>
<dbReference type="InterPro" id="IPR010989">
    <property type="entry name" value="SNARE"/>
</dbReference>
<dbReference type="InterPro" id="IPR045242">
    <property type="entry name" value="Syntaxin"/>
</dbReference>
<dbReference type="InterPro" id="IPR006012">
    <property type="entry name" value="Syntaxin/epimorphin_CS"/>
</dbReference>
<dbReference type="InterPro" id="IPR000727">
    <property type="entry name" value="T_SNARE_dom"/>
</dbReference>
<dbReference type="PANTHER" id="PTHR19957">
    <property type="entry name" value="SYNTAXIN"/>
    <property type="match status" value="1"/>
</dbReference>
<dbReference type="PANTHER" id="PTHR19957:SF228">
    <property type="entry name" value="SYNTAXIN-31"/>
    <property type="match status" value="1"/>
</dbReference>
<dbReference type="Pfam" id="PF05739">
    <property type="entry name" value="SNARE"/>
    <property type="match status" value="1"/>
</dbReference>
<dbReference type="SMART" id="SM00397">
    <property type="entry name" value="t_SNARE"/>
    <property type="match status" value="1"/>
</dbReference>
<dbReference type="SUPFAM" id="SSF47661">
    <property type="entry name" value="t-snare proteins"/>
    <property type="match status" value="1"/>
</dbReference>
<dbReference type="PROSITE" id="PS00914">
    <property type="entry name" value="SYNTAXIN"/>
    <property type="match status" value="1"/>
</dbReference>
<dbReference type="PROSITE" id="PS50192">
    <property type="entry name" value="T_SNARE"/>
    <property type="match status" value="1"/>
</dbReference>
<gene>
    <name type="primary">SYP31</name>
    <name type="ordered locus">At5g05760</name>
    <name type="ORF">MJJ3.17</name>
</gene>
<reference key="1">
    <citation type="journal article" date="2000" name="Mol. Biol. Cell">
        <title>AtVPS45 complex formation at the trans-Golgi network.</title>
        <authorList>
            <person name="Bassham D.C."/>
            <person name="Sanderfoot A.A."/>
            <person name="Kovaleva V."/>
            <person name="Zheng H."/>
            <person name="Raikhel N.V."/>
        </authorList>
    </citation>
    <scope>NUCLEOTIDE SEQUENCE [MRNA]</scope>
    <source>
        <strain>cv. Columbia</strain>
    </source>
</reference>
<reference key="2">
    <citation type="journal article" date="1997" name="DNA Res.">
        <title>Structural analysis of Arabidopsis thaliana chromosome 5. I. Sequence features of the 1.6 Mb regions covered by twenty physically assigned P1 clones.</title>
        <authorList>
            <person name="Sato S."/>
            <person name="Kotani H."/>
            <person name="Nakamura Y."/>
            <person name="Kaneko T."/>
            <person name="Asamizu E."/>
            <person name="Fukami M."/>
            <person name="Miyajima N."/>
            <person name="Tabata S."/>
        </authorList>
    </citation>
    <scope>NUCLEOTIDE SEQUENCE [LARGE SCALE GENOMIC DNA]</scope>
    <source>
        <strain>cv. Columbia</strain>
    </source>
</reference>
<reference key="3">
    <citation type="journal article" date="2017" name="Plant J.">
        <title>Araport11: a complete reannotation of the Arabidopsis thaliana reference genome.</title>
        <authorList>
            <person name="Cheng C.Y."/>
            <person name="Krishnakumar V."/>
            <person name="Chan A.P."/>
            <person name="Thibaud-Nissen F."/>
            <person name="Schobel S."/>
            <person name="Town C.D."/>
        </authorList>
    </citation>
    <scope>GENOME REANNOTATION</scope>
    <source>
        <strain>cv. Columbia</strain>
    </source>
</reference>
<reference key="4">
    <citation type="journal article" date="2003" name="Science">
        <title>Empirical analysis of transcriptional activity in the Arabidopsis genome.</title>
        <authorList>
            <person name="Yamada K."/>
            <person name="Lim J."/>
            <person name="Dale J.M."/>
            <person name="Chen H."/>
            <person name="Shinn P."/>
            <person name="Palm C.J."/>
            <person name="Southwick A.M."/>
            <person name="Wu H.C."/>
            <person name="Kim C.J."/>
            <person name="Nguyen M."/>
            <person name="Pham P.K."/>
            <person name="Cheuk R.F."/>
            <person name="Karlin-Newmann G."/>
            <person name="Liu S.X."/>
            <person name="Lam B."/>
            <person name="Sakano H."/>
            <person name="Wu T."/>
            <person name="Yu G."/>
            <person name="Miranda M."/>
            <person name="Quach H.L."/>
            <person name="Tripp M."/>
            <person name="Chang C.H."/>
            <person name="Lee J.M."/>
            <person name="Toriumi M.J."/>
            <person name="Chan M.M."/>
            <person name="Tang C.C."/>
            <person name="Onodera C.S."/>
            <person name="Deng J.M."/>
            <person name="Akiyama K."/>
            <person name="Ansari Y."/>
            <person name="Arakawa T."/>
            <person name="Banh J."/>
            <person name="Banno F."/>
            <person name="Bowser L."/>
            <person name="Brooks S.Y."/>
            <person name="Carninci P."/>
            <person name="Chao Q."/>
            <person name="Choy N."/>
            <person name="Enju A."/>
            <person name="Goldsmith A.D."/>
            <person name="Gurjal M."/>
            <person name="Hansen N.F."/>
            <person name="Hayashizaki Y."/>
            <person name="Johnson-Hopson C."/>
            <person name="Hsuan V.W."/>
            <person name="Iida K."/>
            <person name="Karnes M."/>
            <person name="Khan S."/>
            <person name="Koesema E."/>
            <person name="Ishida J."/>
            <person name="Jiang P.X."/>
            <person name="Jones T."/>
            <person name="Kawai J."/>
            <person name="Kamiya A."/>
            <person name="Meyers C."/>
            <person name="Nakajima M."/>
            <person name="Narusaka M."/>
            <person name="Seki M."/>
            <person name="Sakurai T."/>
            <person name="Satou M."/>
            <person name="Tamse R."/>
            <person name="Vaysberg M."/>
            <person name="Wallender E.K."/>
            <person name="Wong C."/>
            <person name="Yamamura Y."/>
            <person name="Yuan S."/>
            <person name="Shinozaki K."/>
            <person name="Davis R.W."/>
            <person name="Theologis A."/>
            <person name="Ecker J.R."/>
        </authorList>
    </citation>
    <scope>NUCLEOTIDE SEQUENCE [LARGE SCALE MRNA]</scope>
    <source>
        <strain>cv. Columbia</strain>
    </source>
</reference>
<reference key="5">
    <citation type="journal article" date="2002" name="Plant Physiol.">
        <title>Characterization of AtCDC48. Evidence for multiple membrane fusion mechanisms at the plane of cell division in plants.</title>
        <authorList>
            <person name="Rancour D.M."/>
            <person name="Dickey C.E."/>
            <person name="Park S."/>
            <person name="Bednarek S.Y."/>
        </authorList>
    </citation>
    <scope>SUBCELLULAR LOCATION</scope>
    <scope>INTERACTION WITH CDC48A</scope>
</reference>
<proteinExistence type="evidence at protein level"/>
<keyword id="KW-0175">Coiled coil</keyword>
<keyword id="KW-0963">Cytoplasm</keyword>
<keyword id="KW-0967">Endosome</keyword>
<keyword id="KW-0333">Golgi apparatus</keyword>
<keyword id="KW-0472">Membrane</keyword>
<keyword id="KW-0653">Protein transport</keyword>
<keyword id="KW-1185">Reference proteome</keyword>
<keyword id="KW-0812">Transmembrane</keyword>
<keyword id="KW-1133">Transmembrane helix</keyword>
<keyword id="KW-0813">Transport</keyword>
<feature type="chain" id="PRO_0000210256" description="Syntaxin-31">
    <location>
        <begin position="1"/>
        <end position="336"/>
    </location>
</feature>
<feature type="topological domain" description="Cytoplasmic" evidence="2">
    <location>
        <begin position="1"/>
        <end position="314"/>
    </location>
</feature>
<feature type="transmembrane region" description="Helical; Anchor for type IV membrane protein" evidence="2">
    <location>
        <begin position="315"/>
        <end position="335"/>
    </location>
</feature>
<feature type="topological domain" description="Vesicular" evidence="2">
    <location>
        <position position="336"/>
    </location>
</feature>
<feature type="domain" description="t-SNARE coiled-coil homology" evidence="3">
    <location>
        <begin position="244"/>
        <end position="306"/>
    </location>
</feature>
<feature type="region of interest" description="Disordered" evidence="4">
    <location>
        <begin position="23"/>
        <end position="53"/>
    </location>
</feature>
<feature type="region of interest" description="Disordered" evidence="4">
    <location>
        <begin position="152"/>
        <end position="218"/>
    </location>
</feature>
<feature type="compositionally biased region" description="Basic and acidic residues" evidence="4">
    <location>
        <begin position="154"/>
        <end position="163"/>
    </location>
</feature>
<feature type="compositionally biased region" description="Polar residues" evidence="4">
    <location>
        <begin position="164"/>
        <end position="181"/>
    </location>
</feature>
<feature type="compositionally biased region" description="Low complexity" evidence="4">
    <location>
        <begin position="190"/>
        <end position="202"/>
    </location>
</feature>
<feature type="sequence conflict" description="In Ref. 1; AAC06291." evidence="6" ref="1">
    <original>T</original>
    <variation>A</variation>
    <location>
        <position position="136"/>
    </location>
</feature>
<sequence>MGSTFRDRTVELHSLSQTLKKIGAIPSVHQDEDDPASSKRSSPGSEFNKKASRIGLGIKETSQKITRLAKLAKQSTIFNDRTVEIQELTVLIRNDITGLNMALSDLQTLQNMELADGNYSQDQVGHYTAVCDDLKTRLMGATKQLQDVLTTRSENMKAHENRKQLFSTKNAVDSPPQNNAKSVPEPPPWSSSSNPFGNLQQPLLPPLNTGAPPGSQLRRRSAIENAPSQQMEMSLLQQTVPKQENYSQSRAVALHSVESRITELSGIFPQLATMVTQQGELAIRIDDNMDESLVNVEGARSALLQHLTRISSNRWLMMKIFAVIILFLIVFLFFVA</sequence>
<protein>
    <recommendedName>
        <fullName>Syntaxin-31</fullName>
        <shortName>AtSED5</shortName>
        <shortName>AtSYP31</shortName>
    </recommendedName>
</protein>
<accession>Q9FFK1</accession>
<accession>O65099</accession>